<name>YIDD_PROMM</name>
<accession>Q7V8U8</accession>
<dbReference type="EMBL" id="BX548175">
    <property type="protein sequence ID" value="CAE20403.1"/>
    <property type="molecule type" value="Genomic_DNA"/>
</dbReference>
<dbReference type="KEGG" id="pmt:PMT_0228"/>
<dbReference type="eggNOG" id="COG0759">
    <property type="taxonomic scope" value="Bacteria"/>
</dbReference>
<dbReference type="HOGENOM" id="CLU_144811_6_1_3"/>
<dbReference type="OrthoDB" id="9801753at2"/>
<dbReference type="Proteomes" id="UP000001423">
    <property type="component" value="Chromosome"/>
</dbReference>
<dbReference type="GO" id="GO:0005886">
    <property type="term" value="C:plasma membrane"/>
    <property type="evidence" value="ECO:0007669"/>
    <property type="project" value="UniProtKB-SubCell"/>
</dbReference>
<dbReference type="HAMAP" id="MF_00386">
    <property type="entry name" value="UPF0161_YidD"/>
    <property type="match status" value="1"/>
</dbReference>
<dbReference type="InterPro" id="IPR002696">
    <property type="entry name" value="Membr_insert_effic_factor_YidD"/>
</dbReference>
<dbReference type="NCBIfam" id="TIGR00278">
    <property type="entry name" value="membrane protein insertion efficiency factor YidD"/>
    <property type="match status" value="1"/>
</dbReference>
<dbReference type="PANTHER" id="PTHR33383">
    <property type="entry name" value="MEMBRANE PROTEIN INSERTION EFFICIENCY FACTOR-RELATED"/>
    <property type="match status" value="1"/>
</dbReference>
<dbReference type="PANTHER" id="PTHR33383:SF1">
    <property type="entry name" value="MEMBRANE PROTEIN INSERTION EFFICIENCY FACTOR-RELATED"/>
    <property type="match status" value="1"/>
</dbReference>
<dbReference type="Pfam" id="PF01809">
    <property type="entry name" value="YidD"/>
    <property type="match status" value="1"/>
</dbReference>
<dbReference type="SMART" id="SM01234">
    <property type="entry name" value="Haemolytic"/>
    <property type="match status" value="1"/>
</dbReference>
<comment type="function">
    <text evidence="1">Could be involved in insertion of integral membrane proteins into the membrane.</text>
</comment>
<comment type="subcellular location">
    <subcellularLocation>
        <location evidence="1">Cell inner membrane</location>
        <topology evidence="1">Peripheral membrane protein</topology>
        <orientation evidence="1">Cytoplasmic side</orientation>
    </subcellularLocation>
</comment>
<comment type="similarity">
    <text evidence="1">Belongs to the UPF0161 family.</text>
</comment>
<proteinExistence type="inferred from homology"/>
<feature type="chain" id="PRO_0000171852" description="Putative membrane protein insertion efficiency factor">
    <location>
        <begin position="1"/>
        <end position="88"/>
    </location>
</feature>
<protein>
    <recommendedName>
        <fullName evidence="1">Putative membrane protein insertion efficiency factor</fullName>
    </recommendedName>
</protein>
<sequence length="88" mass="9752">MRESNTLSGGIFALLNRAIGSVLLALIGFYRTWLSPLLGPHCRFIPSCSAYGLEAIQRHGPWRGGWLTLRRLSRCHPFTPCGCDPVPD</sequence>
<organism>
    <name type="scientific">Prochlorococcus marinus (strain MIT 9313)</name>
    <dbReference type="NCBI Taxonomy" id="74547"/>
    <lineage>
        <taxon>Bacteria</taxon>
        <taxon>Bacillati</taxon>
        <taxon>Cyanobacteriota</taxon>
        <taxon>Cyanophyceae</taxon>
        <taxon>Synechococcales</taxon>
        <taxon>Prochlorococcaceae</taxon>
        <taxon>Prochlorococcus</taxon>
    </lineage>
</organism>
<gene>
    <name type="ordered locus">PMT_0228</name>
</gene>
<reference key="1">
    <citation type="journal article" date="2003" name="Nature">
        <title>Genome divergence in two Prochlorococcus ecotypes reflects oceanic niche differentiation.</title>
        <authorList>
            <person name="Rocap G."/>
            <person name="Larimer F.W."/>
            <person name="Lamerdin J.E."/>
            <person name="Malfatti S."/>
            <person name="Chain P."/>
            <person name="Ahlgren N.A."/>
            <person name="Arellano A."/>
            <person name="Coleman M."/>
            <person name="Hauser L."/>
            <person name="Hess W.R."/>
            <person name="Johnson Z.I."/>
            <person name="Land M.L."/>
            <person name="Lindell D."/>
            <person name="Post A.F."/>
            <person name="Regala W."/>
            <person name="Shah M."/>
            <person name="Shaw S.L."/>
            <person name="Steglich C."/>
            <person name="Sullivan M.B."/>
            <person name="Ting C.S."/>
            <person name="Tolonen A."/>
            <person name="Webb E.A."/>
            <person name="Zinser E.R."/>
            <person name="Chisholm S.W."/>
        </authorList>
    </citation>
    <scope>NUCLEOTIDE SEQUENCE [LARGE SCALE GENOMIC DNA]</scope>
    <source>
        <strain>MIT 9313</strain>
    </source>
</reference>
<evidence type="ECO:0000255" key="1">
    <source>
        <dbReference type="HAMAP-Rule" id="MF_00386"/>
    </source>
</evidence>
<keyword id="KW-0997">Cell inner membrane</keyword>
<keyword id="KW-1003">Cell membrane</keyword>
<keyword id="KW-0472">Membrane</keyword>
<keyword id="KW-1185">Reference proteome</keyword>